<accession>B5FDA0</accession>
<dbReference type="EC" id="2.6.1.9" evidence="1"/>
<dbReference type="EMBL" id="CP001139">
    <property type="protein sequence ID" value="ACH66609.1"/>
    <property type="molecule type" value="Genomic_DNA"/>
</dbReference>
<dbReference type="RefSeq" id="WP_012533855.1">
    <property type="nucleotide sequence ID" value="NC_011184.1"/>
</dbReference>
<dbReference type="SMR" id="B5FDA0"/>
<dbReference type="KEGG" id="vfm:VFMJ11_1097"/>
<dbReference type="HOGENOM" id="CLU_017584_3_1_6"/>
<dbReference type="UniPathway" id="UPA00031">
    <property type="reaction ID" value="UER00012"/>
</dbReference>
<dbReference type="Proteomes" id="UP000001857">
    <property type="component" value="Chromosome I"/>
</dbReference>
<dbReference type="GO" id="GO:0004400">
    <property type="term" value="F:histidinol-phosphate transaminase activity"/>
    <property type="evidence" value="ECO:0007669"/>
    <property type="project" value="UniProtKB-UniRule"/>
</dbReference>
<dbReference type="GO" id="GO:0030170">
    <property type="term" value="F:pyridoxal phosphate binding"/>
    <property type="evidence" value="ECO:0007669"/>
    <property type="project" value="InterPro"/>
</dbReference>
<dbReference type="GO" id="GO:0000105">
    <property type="term" value="P:L-histidine biosynthetic process"/>
    <property type="evidence" value="ECO:0007669"/>
    <property type="project" value="UniProtKB-UniRule"/>
</dbReference>
<dbReference type="CDD" id="cd00609">
    <property type="entry name" value="AAT_like"/>
    <property type="match status" value="1"/>
</dbReference>
<dbReference type="Gene3D" id="3.90.1150.10">
    <property type="entry name" value="Aspartate Aminotransferase, domain 1"/>
    <property type="match status" value="1"/>
</dbReference>
<dbReference type="Gene3D" id="3.40.640.10">
    <property type="entry name" value="Type I PLP-dependent aspartate aminotransferase-like (Major domain)"/>
    <property type="match status" value="1"/>
</dbReference>
<dbReference type="HAMAP" id="MF_01023">
    <property type="entry name" value="HisC_aminotrans_2"/>
    <property type="match status" value="1"/>
</dbReference>
<dbReference type="InterPro" id="IPR001917">
    <property type="entry name" value="Aminotrans_II_pyridoxalP_BS"/>
</dbReference>
<dbReference type="InterPro" id="IPR004839">
    <property type="entry name" value="Aminotransferase_I/II_large"/>
</dbReference>
<dbReference type="InterPro" id="IPR005861">
    <property type="entry name" value="HisP_aminotrans"/>
</dbReference>
<dbReference type="InterPro" id="IPR015424">
    <property type="entry name" value="PyrdxlP-dep_Trfase"/>
</dbReference>
<dbReference type="InterPro" id="IPR015421">
    <property type="entry name" value="PyrdxlP-dep_Trfase_major"/>
</dbReference>
<dbReference type="InterPro" id="IPR015422">
    <property type="entry name" value="PyrdxlP-dep_Trfase_small"/>
</dbReference>
<dbReference type="NCBIfam" id="TIGR01141">
    <property type="entry name" value="hisC"/>
    <property type="match status" value="1"/>
</dbReference>
<dbReference type="PANTHER" id="PTHR42885:SF2">
    <property type="entry name" value="HISTIDINOL-PHOSPHATE AMINOTRANSFERASE"/>
    <property type="match status" value="1"/>
</dbReference>
<dbReference type="PANTHER" id="PTHR42885">
    <property type="entry name" value="HISTIDINOL-PHOSPHATE AMINOTRANSFERASE-RELATED"/>
    <property type="match status" value="1"/>
</dbReference>
<dbReference type="Pfam" id="PF00155">
    <property type="entry name" value="Aminotran_1_2"/>
    <property type="match status" value="1"/>
</dbReference>
<dbReference type="SUPFAM" id="SSF53383">
    <property type="entry name" value="PLP-dependent transferases"/>
    <property type="match status" value="1"/>
</dbReference>
<dbReference type="PROSITE" id="PS00599">
    <property type="entry name" value="AA_TRANSFER_CLASS_2"/>
    <property type="match status" value="1"/>
</dbReference>
<sequence>MEKLARKQVQALTPYLSARRIGGSGDVWLNANESPFDNEYKFNFARLNRYSECQPPELINAYAAYAEVKPEQVLTSRGADEGIELLVRAFCEPNQDAILYCPPTYGMYSISAETIGVETKTVPLTSDWQLDLPAIEASLENVKVVFVCSPNNPTGNIVDRKDILSLLEMTKDRAIVVMDEAYIDFCMEKSTVDLLADYPHLAILRTLSKAFALAGLRCGFTLANEELINVLLKVIAPYPVPVPVAEIATQALSEAGLARMKYQMLDLSANRAYLQAGLMVLPGVTVYEGWGNYLLVKFTNGDAVFKAAWDHGIILRNSPIENCVRISVGNREECEKTLGFIRNQLI</sequence>
<feature type="chain" id="PRO_1000135430" description="Histidinol-phosphate aminotransferase">
    <location>
        <begin position="1"/>
        <end position="346"/>
    </location>
</feature>
<feature type="modified residue" description="N6-(pyridoxal phosphate)lysine" evidence="1">
    <location>
        <position position="209"/>
    </location>
</feature>
<gene>
    <name evidence="1" type="primary">hisC</name>
    <name type="ordered locus">VFMJ11_1097</name>
</gene>
<name>HIS8_ALIFM</name>
<reference key="1">
    <citation type="submission" date="2008-08" db="EMBL/GenBank/DDBJ databases">
        <title>Complete sequence of Vibrio fischeri strain MJ11.</title>
        <authorList>
            <person name="Mandel M.J."/>
            <person name="Stabb E.V."/>
            <person name="Ruby E.G."/>
            <person name="Ferriera S."/>
            <person name="Johnson J."/>
            <person name="Kravitz S."/>
            <person name="Beeson K."/>
            <person name="Sutton G."/>
            <person name="Rogers Y.-H."/>
            <person name="Friedman R."/>
            <person name="Frazier M."/>
            <person name="Venter J.C."/>
        </authorList>
    </citation>
    <scope>NUCLEOTIDE SEQUENCE [LARGE SCALE GENOMIC DNA]</scope>
    <source>
        <strain>MJ11</strain>
    </source>
</reference>
<evidence type="ECO:0000255" key="1">
    <source>
        <dbReference type="HAMAP-Rule" id="MF_01023"/>
    </source>
</evidence>
<keyword id="KW-0028">Amino-acid biosynthesis</keyword>
<keyword id="KW-0032">Aminotransferase</keyword>
<keyword id="KW-0368">Histidine biosynthesis</keyword>
<keyword id="KW-0663">Pyridoxal phosphate</keyword>
<keyword id="KW-0808">Transferase</keyword>
<proteinExistence type="inferred from homology"/>
<comment type="catalytic activity">
    <reaction evidence="1">
        <text>L-histidinol phosphate + 2-oxoglutarate = 3-(imidazol-4-yl)-2-oxopropyl phosphate + L-glutamate</text>
        <dbReference type="Rhea" id="RHEA:23744"/>
        <dbReference type="ChEBI" id="CHEBI:16810"/>
        <dbReference type="ChEBI" id="CHEBI:29985"/>
        <dbReference type="ChEBI" id="CHEBI:57766"/>
        <dbReference type="ChEBI" id="CHEBI:57980"/>
        <dbReference type="EC" id="2.6.1.9"/>
    </reaction>
</comment>
<comment type="cofactor">
    <cofactor evidence="1">
        <name>pyridoxal 5'-phosphate</name>
        <dbReference type="ChEBI" id="CHEBI:597326"/>
    </cofactor>
</comment>
<comment type="pathway">
    <text evidence="1">Amino-acid biosynthesis; L-histidine biosynthesis; L-histidine from 5-phospho-alpha-D-ribose 1-diphosphate: step 7/9.</text>
</comment>
<comment type="subunit">
    <text evidence="1">Homodimer.</text>
</comment>
<comment type="similarity">
    <text evidence="1">Belongs to the class-II pyridoxal-phosphate-dependent aminotransferase family. Histidinol-phosphate aminotransferase subfamily.</text>
</comment>
<protein>
    <recommendedName>
        <fullName evidence="1">Histidinol-phosphate aminotransferase</fullName>
        <ecNumber evidence="1">2.6.1.9</ecNumber>
    </recommendedName>
    <alternativeName>
        <fullName evidence="1">Imidazole acetol-phosphate transaminase</fullName>
    </alternativeName>
</protein>
<organism>
    <name type="scientific">Aliivibrio fischeri (strain MJ11)</name>
    <name type="common">Vibrio fischeri</name>
    <dbReference type="NCBI Taxonomy" id="388396"/>
    <lineage>
        <taxon>Bacteria</taxon>
        <taxon>Pseudomonadati</taxon>
        <taxon>Pseudomonadota</taxon>
        <taxon>Gammaproteobacteria</taxon>
        <taxon>Vibrionales</taxon>
        <taxon>Vibrionaceae</taxon>
        <taxon>Aliivibrio</taxon>
    </lineage>
</organism>